<proteinExistence type="inferred from homology"/>
<feature type="chain" id="PRO_0000109101" description="UDP-N-acetylmuramoylalanine--D-glutamate ligase">
    <location>
        <begin position="1"/>
        <end position="452"/>
    </location>
</feature>
<feature type="binding site" evidence="2">
    <location>
        <begin position="119"/>
        <end position="125"/>
    </location>
    <ligand>
        <name>ATP</name>
        <dbReference type="ChEBI" id="CHEBI:30616"/>
    </ligand>
</feature>
<sequence>MKVISNFQNKKILILGLAKSGEAAAKLLTKLGALVTVNDSKPFDQNPAAQALLEEGIKVICGSHPVELLDEDFEYMVKNPGIPYDNPMVKRALAKEIPILTEVELAYFVSEAPIIGITGSNGKTTTTTMIADVLNAGGQSALLSGNIGYPASKVVQKAIAGDTLVMELSSFQLVGVNAFRPHIAVITNLMPTHLDYHGSFEDYVAAKWMIQAQMTESDYLILNANQEISATLAKTTQATVIPFSTQKVVDGAYLKDGILYFKEQAIIAATDLGVPGSHNIENALATIAVAKLSGIADDIIAQCLSHFGGVKHRLQRVGQIKDITFYNDSKSTNILATQKALSGFDNSRLILIAGGLDRGNEFDDLVPDLLGLKQMIILGESAERMKRAANKAEVSYLEARNVAEATELAFKLAQTGDTILLSPANASWDMYPNFEVRGDEFLATFDCLRGDA</sequence>
<evidence type="ECO:0000250" key="1"/>
<evidence type="ECO:0000255" key="2"/>
<evidence type="ECO:0000305" key="3"/>
<keyword id="KW-0067">ATP-binding</keyword>
<keyword id="KW-0131">Cell cycle</keyword>
<keyword id="KW-0132">Cell division</keyword>
<keyword id="KW-0133">Cell shape</keyword>
<keyword id="KW-0961">Cell wall biogenesis/degradation</keyword>
<keyword id="KW-0963">Cytoplasm</keyword>
<keyword id="KW-0436">Ligase</keyword>
<keyword id="KW-0547">Nucleotide-binding</keyword>
<keyword id="KW-0573">Peptidoglycan synthesis</keyword>
<gene>
    <name type="primary">murD</name>
    <name type="ordered locus">SpyM3_1176</name>
</gene>
<organism>
    <name type="scientific">Streptococcus pyogenes serotype M3 (strain ATCC BAA-595 / MGAS315)</name>
    <dbReference type="NCBI Taxonomy" id="198466"/>
    <lineage>
        <taxon>Bacteria</taxon>
        <taxon>Bacillati</taxon>
        <taxon>Bacillota</taxon>
        <taxon>Bacilli</taxon>
        <taxon>Lactobacillales</taxon>
        <taxon>Streptococcaceae</taxon>
        <taxon>Streptococcus</taxon>
    </lineage>
</organism>
<comment type="function">
    <text evidence="1">Cell wall formation. Catalyzes the addition of glutamate to the nucleotide precursor UDP-N-acetylmuramoyl-L-alanine (UMA).</text>
</comment>
<comment type="catalytic activity">
    <reaction>
        <text>UDP-N-acetyl-alpha-D-muramoyl-L-alanine + D-glutamate + ATP = UDP-N-acetyl-alpha-D-muramoyl-L-alanyl-D-glutamate + ADP + phosphate + H(+)</text>
        <dbReference type="Rhea" id="RHEA:16429"/>
        <dbReference type="ChEBI" id="CHEBI:15378"/>
        <dbReference type="ChEBI" id="CHEBI:29986"/>
        <dbReference type="ChEBI" id="CHEBI:30616"/>
        <dbReference type="ChEBI" id="CHEBI:43474"/>
        <dbReference type="ChEBI" id="CHEBI:83898"/>
        <dbReference type="ChEBI" id="CHEBI:83900"/>
        <dbReference type="ChEBI" id="CHEBI:456216"/>
        <dbReference type="EC" id="6.3.2.9"/>
    </reaction>
</comment>
<comment type="pathway">
    <text>Cell wall biogenesis; peptidoglycan biosynthesis.</text>
</comment>
<comment type="subcellular location">
    <subcellularLocation>
        <location evidence="1">Cytoplasm</location>
    </subcellularLocation>
</comment>
<comment type="similarity">
    <text evidence="3">Belongs to the MurCDEF family.</text>
</comment>
<name>MURD_STRP3</name>
<accession>P0DC52</accession>
<accession>O68388</accession>
<accession>Q879A1</accession>
<accession>Q99YV3</accession>
<accession>Q9FB03</accession>
<reference key="1">
    <citation type="journal article" date="2002" name="Proc. Natl. Acad. Sci. U.S.A.">
        <title>Genome sequence of a serotype M3 strain of group A Streptococcus: phage-encoded toxins, the high-virulence phenotype, and clone emergence.</title>
        <authorList>
            <person name="Beres S.B."/>
            <person name="Sylva G.L."/>
            <person name="Barbian K.D."/>
            <person name="Lei B."/>
            <person name="Hoff J.S."/>
            <person name="Mammarella N.D."/>
            <person name="Liu M.-Y."/>
            <person name="Smoot J.C."/>
            <person name="Porcella S.F."/>
            <person name="Parkins L.D."/>
            <person name="Campbell D.S."/>
            <person name="Smith T.M."/>
            <person name="McCormick J.K."/>
            <person name="Leung D.Y.M."/>
            <person name="Schlievert P.M."/>
            <person name="Musser J.M."/>
        </authorList>
    </citation>
    <scope>NUCLEOTIDE SEQUENCE [LARGE SCALE GENOMIC DNA]</scope>
    <source>
        <strain>ATCC BAA-595 / MGAS315</strain>
    </source>
</reference>
<protein>
    <recommendedName>
        <fullName>UDP-N-acetylmuramoylalanine--D-glutamate ligase</fullName>
        <ecNumber>6.3.2.9</ecNumber>
    </recommendedName>
    <alternativeName>
        <fullName>D-glutamic acid-adding enzyme</fullName>
    </alternativeName>
    <alternativeName>
        <fullName>UDP-N-acetylmuramoyl-L-alanyl-D-glutamate synthetase</fullName>
    </alternativeName>
</protein>
<dbReference type="EC" id="6.3.2.9"/>
<dbReference type="EMBL" id="AE014074">
    <property type="protein sequence ID" value="AAM79783.1"/>
    <property type="molecule type" value="Genomic_DNA"/>
</dbReference>
<dbReference type="RefSeq" id="WP_011054713.1">
    <property type="nucleotide sequence ID" value="NC_004070.1"/>
</dbReference>
<dbReference type="SMR" id="P0DC52"/>
<dbReference type="KEGG" id="spg:SpyM3_1176"/>
<dbReference type="HOGENOM" id="CLU_032540_0_1_9"/>
<dbReference type="UniPathway" id="UPA00219"/>
<dbReference type="Proteomes" id="UP000000564">
    <property type="component" value="Chromosome"/>
</dbReference>
<dbReference type="GO" id="GO:0005737">
    <property type="term" value="C:cytoplasm"/>
    <property type="evidence" value="ECO:0007669"/>
    <property type="project" value="UniProtKB-SubCell"/>
</dbReference>
<dbReference type="GO" id="GO:0005524">
    <property type="term" value="F:ATP binding"/>
    <property type="evidence" value="ECO:0007669"/>
    <property type="project" value="UniProtKB-UniRule"/>
</dbReference>
<dbReference type="GO" id="GO:0008764">
    <property type="term" value="F:UDP-N-acetylmuramoylalanine-D-glutamate ligase activity"/>
    <property type="evidence" value="ECO:0007669"/>
    <property type="project" value="UniProtKB-UniRule"/>
</dbReference>
<dbReference type="GO" id="GO:0051301">
    <property type="term" value="P:cell division"/>
    <property type="evidence" value="ECO:0007669"/>
    <property type="project" value="UniProtKB-KW"/>
</dbReference>
<dbReference type="GO" id="GO:0071555">
    <property type="term" value="P:cell wall organization"/>
    <property type="evidence" value="ECO:0007669"/>
    <property type="project" value="UniProtKB-KW"/>
</dbReference>
<dbReference type="GO" id="GO:0009252">
    <property type="term" value="P:peptidoglycan biosynthetic process"/>
    <property type="evidence" value="ECO:0007669"/>
    <property type="project" value="UniProtKB-UniRule"/>
</dbReference>
<dbReference type="GO" id="GO:0008360">
    <property type="term" value="P:regulation of cell shape"/>
    <property type="evidence" value="ECO:0007669"/>
    <property type="project" value="UniProtKB-KW"/>
</dbReference>
<dbReference type="Gene3D" id="3.90.190.20">
    <property type="entry name" value="Mur ligase, C-terminal domain"/>
    <property type="match status" value="1"/>
</dbReference>
<dbReference type="Gene3D" id="3.40.1190.10">
    <property type="entry name" value="Mur-like, catalytic domain"/>
    <property type="match status" value="1"/>
</dbReference>
<dbReference type="Gene3D" id="3.40.50.720">
    <property type="entry name" value="NAD(P)-binding Rossmann-like Domain"/>
    <property type="match status" value="1"/>
</dbReference>
<dbReference type="HAMAP" id="MF_00639">
    <property type="entry name" value="MurD"/>
    <property type="match status" value="1"/>
</dbReference>
<dbReference type="InterPro" id="IPR036565">
    <property type="entry name" value="Mur-like_cat_sf"/>
</dbReference>
<dbReference type="InterPro" id="IPR004101">
    <property type="entry name" value="Mur_ligase_C"/>
</dbReference>
<dbReference type="InterPro" id="IPR036615">
    <property type="entry name" value="Mur_ligase_C_dom_sf"/>
</dbReference>
<dbReference type="InterPro" id="IPR013221">
    <property type="entry name" value="Mur_ligase_cen"/>
</dbReference>
<dbReference type="InterPro" id="IPR005762">
    <property type="entry name" value="MurD"/>
</dbReference>
<dbReference type="NCBIfam" id="TIGR01087">
    <property type="entry name" value="murD"/>
    <property type="match status" value="1"/>
</dbReference>
<dbReference type="PANTHER" id="PTHR43692">
    <property type="entry name" value="UDP-N-ACETYLMURAMOYLALANINE--D-GLUTAMATE LIGASE"/>
    <property type="match status" value="1"/>
</dbReference>
<dbReference type="PANTHER" id="PTHR43692:SF1">
    <property type="entry name" value="UDP-N-ACETYLMURAMOYLALANINE--D-GLUTAMATE LIGASE"/>
    <property type="match status" value="1"/>
</dbReference>
<dbReference type="Pfam" id="PF02875">
    <property type="entry name" value="Mur_ligase_C"/>
    <property type="match status" value="1"/>
</dbReference>
<dbReference type="Pfam" id="PF08245">
    <property type="entry name" value="Mur_ligase_M"/>
    <property type="match status" value="1"/>
</dbReference>
<dbReference type="Pfam" id="PF21799">
    <property type="entry name" value="MurD-like_N"/>
    <property type="match status" value="1"/>
</dbReference>
<dbReference type="SUPFAM" id="SSF51984">
    <property type="entry name" value="MurCD N-terminal domain"/>
    <property type="match status" value="1"/>
</dbReference>
<dbReference type="SUPFAM" id="SSF53623">
    <property type="entry name" value="MurD-like peptide ligases, catalytic domain"/>
    <property type="match status" value="1"/>
</dbReference>
<dbReference type="SUPFAM" id="SSF53244">
    <property type="entry name" value="MurD-like peptide ligases, peptide-binding domain"/>
    <property type="match status" value="1"/>
</dbReference>